<sequence length="182" mass="19719">MHCPFCRHPDSRVVDSRTTDDGTSIRRRRQCPDCSRRFTTVETCSLMVVKRSGVTEPFSRTKVINGVRKACQGRPVTEDALAQLGQRVEEAVRATGSAELTTHDVGLAILGPLQELDLVAYLRFASVYRAFDSLEDFEAAIAELRETTGHPGEEDDTGAGSQENDRGPTGAGQVPEPAGAAD</sequence>
<comment type="function">
    <text evidence="2 3 4">Negatively regulates transcription of nrdRJ (class II RNR genes) and nrdABS operon (class I RNR genes) by binding to NrdR-boxes which are proximal to or overlap with the promoter regions of class II and class Ia RNR operons, respectively.</text>
</comment>
<comment type="cofactor">
    <cofactor evidence="4">
        <name>Zn(2+)</name>
        <dbReference type="ChEBI" id="CHEBI:29105"/>
    </cofactor>
    <text evidence="4">Binds 1 zinc ion.</text>
</comment>
<comment type="domain">
    <text>The ATP-cone domain may function to recruit ATP/dATP to elicit a conformational change in NrdR that is necessary for binding.</text>
</comment>
<comment type="disruption phenotype">
    <text evidence="2">Cells up-regulate expression of nrdRJ and nrdABS transcription. A mutant in which amino acids 1 to 41 are deleted is unable to bind zinc and also unable to bind the nrdABS and nrdRJ promoters. A mutant in which amino acids 151 to 182 are deleted is able to bind to both promoters to the same extent as the wild-type. Functional zinc-finger and ATP-cone domain are required for binding to the promoter regions of both sets of RNR genes.</text>
</comment>
<comment type="miscellaneous">
    <text>Seems to be allosterically activated by ATP/dATP.</text>
</comment>
<comment type="similarity">
    <text evidence="5">Belongs to the NrdR family.</text>
</comment>
<feature type="chain" id="PRO_0000182365" description="Transcriptional repressor NrdR">
    <location>
        <begin position="1"/>
        <end position="182"/>
    </location>
</feature>
<feature type="domain" description="ATP-cone">
    <location>
        <begin position="46"/>
        <end position="136"/>
    </location>
</feature>
<feature type="zinc finger region">
    <location>
        <begin position="3"/>
        <end position="34"/>
    </location>
</feature>
<feature type="region of interest" description="Disordered" evidence="1">
    <location>
        <begin position="144"/>
        <end position="182"/>
    </location>
</feature>
<feature type="mutagenesis site" description="7-fold reduction in the amount of zinc bound. No binding to nrdABS and nrdRJ promoters." evidence="4">
    <original>C</original>
    <variation>A</variation>
    <location>
        <position position="3"/>
    </location>
</feature>
<feature type="mutagenesis site" description="Loss of ATP/dATP binding. Weak binding to nrdABS and nrdRJ promoters." evidence="4">
    <original>KR</original>
    <variation>NG</variation>
    <location>
        <begin position="50"/>
        <end position="51"/>
    </location>
</feature>
<feature type="turn" evidence="6">
    <location>
        <begin position="4"/>
        <end position="6"/>
    </location>
</feature>
<feature type="strand" evidence="6">
    <location>
        <begin position="12"/>
        <end position="18"/>
    </location>
</feature>
<feature type="turn" evidence="7">
    <location>
        <begin position="21"/>
        <end position="23"/>
    </location>
</feature>
<feature type="strand" evidence="6">
    <location>
        <begin position="25"/>
        <end position="30"/>
    </location>
</feature>
<feature type="turn" evidence="6">
    <location>
        <begin position="32"/>
        <end position="34"/>
    </location>
</feature>
<feature type="strand" evidence="6">
    <location>
        <begin position="37"/>
        <end position="43"/>
    </location>
</feature>
<feature type="strand" evidence="6">
    <location>
        <begin position="47"/>
        <end position="49"/>
    </location>
</feature>
<feature type="strand" evidence="7">
    <location>
        <begin position="51"/>
        <end position="53"/>
    </location>
</feature>
<feature type="strand" evidence="6">
    <location>
        <begin position="55"/>
        <end position="57"/>
    </location>
</feature>
<feature type="helix" evidence="6">
    <location>
        <begin position="60"/>
        <end position="70"/>
    </location>
</feature>
<feature type="turn" evidence="6">
    <location>
        <begin position="71"/>
        <end position="73"/>
    </location>
</feature>
<feature type="helix" evidence="6">
    <location>
        <begin position="78"/>
        <end position="94"/>
    </location>
</feature>
<feature type="strand" evidence="6">
    <location>
        <begin position="98"/>
        <end position="101"/>
    </location>
</feature>
<feature type="helix" evidence="6">
    <location>
        <begin position="102"/>
        <end position="116"/>
    </location>
</feature>
<feature type="helix" evidence="6">
    <location>
        <begin position="118"/>
        <end position="128"/>
    </location>
</feature>
<feature type="helix" evidence="6">
    <location>
        <begin position="134"/>
        <end position="146"/>
    </location>
</feature>
<dbReference type="EMBL" id="AM039891">
    <property type="protein sequence ID" value="CAJ01781.1"/>
    <property type="molecule type" value="Genomic_RNA"/>
</dbReference>
<dbReference type="EMBL" id="AL939125">
    <property type="protein sequence ID" value="CAA18340.1"/>
    <property type="molecule type" value="Genomic_DNA"/>
</dbReference>
<dbReference type="PIR" id="T35124">
    <property type="entry name" value="T35124"/>
</dbReference>
<dbReference type="RefSeq" id="NP_629928.1">
    <property type="nucleotide sequence ID" value="NC_003888.3"/>
</dbReference>
<dbReference type="RefSeq" id="WP_003973218.1">
    <property type="nucleotide sequence ID" value="NZ_VNID01000007.1"/>
</dbReference>
<dbReference type="PDB" id="7P37">
    <property type="method" value="EM"/>
    <property type="resolution" value="2.96 A"/>
    <property type="chains" value="A/B/C/D/E/F/G/H/I/J/K/L=1-182"/>
</dbReference>
<dbReference type="PDB" id="7P3F">
    <property type="method" value="EM"/>
    <property type="resolution" value="3.31 A"/>
    <property type="chains" value="A/B/C/D=1-182"/>
</dbReference>
<dbReference type="PDB" id="7P3Q">
    <property type="method" value="EM"/>
    <property type="resolution" value="3.12 A"/>
    <property type="chains" value="A/B/C/D/E/F/G/H=1-182"/>
</dbReference>
<dbReference type="PDBsum" id="7P37"/>
<dbReference type="PDBsum" id="7P3F"/>
<dbReference type="PDBsum" id="7P3Q"/>
<dbReference type="EMDB" id="EMD-13178"/>
<dbReference type="EMDB" id="EMD-13179"/>
<dbReference type="EMDB" id="EMD-13182"/>
<dbReference type="SMR" id="O69980"/>
<dbReference type="FunCoup" id="O69980">
    <property type="interactions" value="28"/>
</dbReference>
<dbReference type="STRING" id="100226.gene:17763464"/>
<dbReference type="PaxDb" id="100226-SCO5804"/>
<dbReference type="GeneID" id="91383248"/>
<dbReference type="KEGG" id="sco:SCO5804"/>
<dbReference type="PATRIC" id="fig|100226.15.peg.5896"/>
<dbReference type="eggNOG" id="COG1327">
    <property type="taxonomic scope" value="Bacteria"/>
</dbReference>
<dbReference type="HOGENOM" id="CLU_108412_1_0_11"/>
<dbReference type="InParanoid" id="O69980"/>
<dbReference type="OrthoDB" id="9807461at2"/>
<dbReference type="PhylomeDB" id="O69980"/>
<dbReference type="Proteomes" id="UP000001973">
    <property type="component" value="Chromosome"/>
</dbReference>
<dbReference type="GO" id="GO:0005524">
    <property type="term" value="F:ATP binding"/>
    <property type="evidence" value="ECO:0007669"/>
    <property type="project" value="UniProtKB-KW"/>
</dbReference>
<dbReference type="GO" id="GO:0003690">
    <property type="term" value="F:double-stranded DNA binding"/>
    <property type="evidence" value="ECO:0000318"/>
    <property type="project" value="GO_Central"/>
</dbReference>
<dbReference type="GO" id="GO:0008270">
    <property type="term" value="F:zinc ion binding"/>
    <property type="evidence" value="ECO:0007669"/>
    <property type="project" value="UniProtKB-UniRule"/>
</dbReference>
<dbReference type="GO" id="GO:0045892">
    <property type="term" value="P:negative regulation of DNA-templated transcription"/>
    <property type="evidence" value="ECO:0000318"/>
    <property type="project" value="GO_Central"/>
</dbReference>
<dbReference type="HAMAP" id="MF_00440">
    <property type="entry name" value="NrdR"/>
    <property type="match status" value="1"/>
</dbReference>
<dbReference type="InterPro" id="IPR005144">
    <property type="entry name" value="ATP-cone_dom"/>
</dbReference>
<dbReference type="InterPro" id="IPR055173">
    <property type="entry name" value="NrdR-like_N"/>
</dbReference>
<dbReference type="InterPro" id="IPR003796">
    <property type="entry name" value="RNR_NrdR-like"/>
</dbReference>
<dbReference type="NCBIfam" id="TIGR00244">
    <property type="entry name" value="transcriptional regulator NrdR"/>
    <property type="match status" value="1"/>
</dbReference>
<dbReference type="PANTHER" id="PTHR30455">
    <property type="entry name" value="TRANSCRIPTIONAL REPRESSOR NRDR"/>
    <property type="match status" value="1"/>
</dbReference>
<dbReference type="PANTHER" id="PTHR30455:SF2">
    <property type="entry name" value="TRANSCRIPTIONAL REPRESSOR NRDR"/>
    <property type="match status" value="1"/>
</dbReference>
<dbReference type="Pfam" id="PF03477">
    <property type="entry name" value="ATP-cone"/>
    <property type="match status" value="1"/>
</dbReference>
<dbReference type="Pfam" id="PF22811">
    <property type="entry name" value="Zn_ribbon_NrdR"/>
    <property type="match status" value="1"/>
</dbReference>
<dbReference type="PROSITE" id="PS51161">
    <property type="entry name" value="ATP_CONE"/>
    <property type="match status" value="1"/>
</dbReference>
<evidence type="ECO:0000256" key="1">
    <source>
        <dbReference type="SAM" id="MobiDB-lite"/>
    </source>
</evidence>
<evidence type="ECO:0000269" key="2">
    <source>
    </source>
</evidence>
<evidence type="ECO:0000269" key="3">
    <source>
    </source>
</evidence>
<evidence type="ECO:0000269" key="4">
    <source>
    </source>
</evidence>
<evidence type="ECO:0000305" key="5"/>
<evidence type="ECO:0007829" key="6">
    <source>
        <dbReference type="PDB" id="7P37"/>
    </source>
</evidence>
<evidence type="ECO:0007829" key="7">
    <source>
        <dbReference type="PDB" id="7P3F"/>
    </source>
</evidence>
<keyword id="KW-0002">3D-structure</keyword>
<keyword id="KW-0067">ATP-binding</keyword>
<keyword id="KW-0238">DNA-binding</keyword>
<keyword id="KW-0479">Metal-binding</keyword>
<keyword id="KW-0547">Nucleotide-binding</keyword>
<keyword id="KW-1185">Reference proteome</keyword>
<keyword id="KW-0678">Repressor</keyword>
<keyword id="KW-0804">Transcription</keyword>
<keyword id="KW-0805">Transcription regulation</keyword>
<keyword id="KW-0862">Zinc</keyword>
<keyword id="KW-0863">Zinc-finger</keyword>
<accession>O69980</accession>
<accession>Q4QZ21</accession>
<reference key="1">
    <citation type="submission" date="2005-06" db="EMBL/GenBank/DDBJ databases">
        <authorList>
            <person name="Borovok I."/>
        </authorList>
    </citation>
    <scope>NUCLEOTIDE SEQUENCE [GENOMIC DNA]</scope>
</reference>
<reference key="2">
    <citation type="journal article" date="2002" name="Nature">
        <title>Complete genome sequence of the model actinomycete Streptomyces coelicolor A3(2).</title>
        <authorList>
            <person name="Bentley S.D."/>
            <person name="Chater K.F."/>
            <person name="Cerdeno-Tarraga A.-M."/>
            <person name="Challis G.L."/>
            <person name="Thomson N.R."/>
            <person name="James K.D."/>
            <person name="Harris D.E."/>
            <person name="Quail M.A."/>
            <person name="Kieser H."/>
            <person name="Harper D."/>
            <person name="Bateman A."/>
            <person name="Brown S."/>
            <person name="Chandra G."/>
            <person name="Chen C.W."/>
            <person name="Collins M."/>
            <person name="Cronin A."/>
            <person name="Fraser A."/>
            <person name="Goble A."/>
            <person name="Hidalgo J."/>
            <person name="Hornsby T."/>
            <person name="Howarth S."/>
            <person name="Huang C.-H."/>
            <person name="Kieser T."/>
            <person name="Larke L."/>
            <person name="Murphy L.D."/>
            <person name="Oliver K."/>
            <person name="O'Neil S."/>
            <person name="Rabbinowitsch E."/>
            <person name="Rajandream M.A."/>
            <person name="Rutherford K.M."/>
            <person name="Rutter S."/>
            <person name="Seeger K."/>
            <person name="Saunders D."/>
            <person name="Sharp S."/>
            <person name="Squares R."/>
            <person name="Squares S."/>
            <person name="Taylor K."/>
            <person name="Warren T."/>
            <person name="Wietzorrek A."/>
            <person name="Woodward J.R."/>
            <person name="Barrell B.G."/>
            <person name="Parkhill J."/>
            <person name="Hopwood D.A."/>
        </authorList>
    </citation>
    <scope>NUCLEOTIDE SEQUENCE [LARGE SCALE GENOMIC DNA]</scope>
    <source>
        <strain>ATCC BAA-471 / A3(2) / M145</strain>
    </source>
</reference>
<reference key="3">
    <citation type="journal article" date="2004" name="Mol. Microbiol.">
        <title>Alternative oxygen-dependent and oxygen-independent ribonucleotide reductases in Streptomyces: cross-regulation and physiological role in response to oxygen limitation.</title>
        <authorList>
            <person name="Borovok I."/>
            <person name="Gorovitz B."/>
            <person name="Yanku M."/>
            <person name="Schreiber R."/>
            <person name="Gust B."/>
            <person name="Chater K."/>
            <person name="Aharonowitz Y."/>
            <person name="Cohen G."/>
        </authorList>
    </citation>
    <scope>FUNCTION</scope>
    <scope>DISRUPTION PHENOTYPE</scope>
    <source>
        <strain>ATCC BAA-471 / A3(2) / M145</strain>
    </source>
</reference>
<reference key="4">
    <citation type="journal article" date="2005" name="Trends Genet.">
        <title>Identification of a bacterial regulatory system for ribonucleotide reductases by phylogenetic profiling.</title>
        <authorList>
            <person name="Rodionov D.A."/>
            <person name="Gelfand M.S."/>
        </authorList>
    </citation>
    <scope>FUNCTION</scope>
</reference>
<reference key="5">
    <citation type="journal article" date="2006" name="J. Bacteriol.">
        <title>The Streptomyces NrdR transcriptional regulator is a Zn ribbon/ATP cone protein that binds to the promoter regions of class Ia and class II ribonucleotide reductase operons.</title>
        <authorList>
            <person name="Grinberg I."/>
            <person name="Shteinberg T."/>
            <person name="Gorovitz B."/>
            <person name="Aharonowitz Y."/>
            <person name="Cohen G."/>
            <person name="Borovok I."/>
        </authorList>
    </citation>
    <scope>FUNCTION</scope>
    <scope>ZINC-FINGER</scope>
    <scope>COFACTOR</scope>
    <scope>PROTEIN REGULATION</scope>
    <scope>MUTAGENESIS OF CYS-3 AND 50-LYS-ARG-51</scope>
    <source>
        <strain>ATCC BAA-471 / A3(2) / M145</strain>
    </source>
</reference>
<proteinExistence type="evidence at protein level"/>
<protein>
    <recommendedName>
        <fullName>Transcriptional repressor NrdR</fullName>
    </recommendedName>
</protein>
<name>NRDR_STRCO</name>
<organism>
    <name type="scientific">Streptomyces coelicolor (strain ATCC BAA-471 / A3(2) / M145)</name>
    <dbReference type="NCBI Taxonomy" id="100226"/>
    <lineage>
        <taxon>Bacteria</taxon>
        <taxon>Bacillati</taxon>
        <taxon>Actinomycetota</taxon>
        <taxon>Actinomycetes</taxon>
        <taxon>Kitasatosporales</taxon>
        <taxon>Streptomycetaceae</taxon>
        <taxon>Streptomyces</taxon>
        <taxon>Streptomyces albidoflavus group</taxon>
    </lineage>
</organism>
<gene>
    <name type="primary">nrdR</name>
    <name type="ordered locus">SCO5804</name>
    <name type="ORF">SC4H2.25</name>
</gene>